<dbReference type="EC" id="6.3.2.8" evidence="1"/>
<dbReference type="EMBL" id="CP000494">
    <property type="protein sequence ID" value="ABQ38095.1"/>
    <property type="molecule type" value="Genomic_DNA"/>
</dbReference>
<dbReference type="RefSeq" id="WP_012046044.1">
    <property type="nucleotide sequence ID" value="NC_009485.1"/>
</dbReference>
<dbReference type="SMR" id="A5EPK1"/>
<dbReference type="STRING" id="288000.BBta_6171"/>
<dbReference type="KEGG" id="bbt:BBta_6171"/>
<dbReference type="eggNOG" id="COG0773">
    <property type="taxonomic scope" value="Bacteria"/>
</dbReference>
<dbReference type="HOGENOM" id="CLU_028104_2_2_5"/>
<dbReference type="OrthoDB" id="9804126at2"/>
<dbReference type="UniPathway" id="UPA00219"/>
<dbReference type="Proteomes" id="UP000000246">
    <property type="component" value="Chromosome"/>
</dbReference>
<dbReference type="GO" id="GO:0005737">
    <property type="term" value="C:cytoplasm"/>
    <property type="evidence" value="ECO:0007669"/>
    <property type="project" value="UniProtKB-SubCell"/>
</dbReference>
<dbReference type="GO" id="GO:0005524">
    <property type="term" value="F:ATP binding"/>
    <property type="evidence" value="ECO:0007669"/>
    <property type="project" value="UniProtKB-UniRule"/>
</dbReference>
<dbReference type="GO" id="GO:0008763">
    <property type="term" value="F:UDP-N-acetylmuramate-L-alanine ligase activity"/>
    <property type="evidence" value="ECO:0007669"/>
    <property type="project" value="UniProtKB-UniRule"/>
</dbReference>
<dbReference type="GO" id="GO:0051301">
    <property type="term" value="P:cell division"/>
    <property type="evidence" value="ECO:0007669"/>
    <property type="project" value="UniProtKB-KW"/>
</dbReference>
<dbReference type="GO" id="GO:0071555">
    <property type="term" value="P:cell wall organization"/>
    <property type="evidence" value="ECO:0007669"/>
    <property type="project" value="UniProtKB-KW"/>
</dbReference>
<dbReference type="GO" id="GO:0009252">
    <property type="term" value="P:peptidoglycan biosynthetic process"/>
    <property type="evidence" value="ECO:0007669"/>
    <property type="project" value="UniProtKB-UniRule"/>
</dbReference>
<dbReference type="GO" id="GO:0008360">
    <property type="term" value="P:regulation of cell shape"/>
    <property type="evidence" value="ECO:0007669"/>
    <property type="project" value="UniProtKB-KW"/>
</dbReference>
<dbReference type="Gene3D" id="3.90.190.20">
    <property type="entry name" value="Mur ligase, C-terminal domain"/>
    <property type="match status" value="1"/>
</dbReference>
<dbReference type="Gene3D" id="3.40.1190.10">
    <property type="entry name" value="Mur-like, catalytic domain"/>
    <property type="match status" value="1"/>
</dbReference>
<dbReference type="Gene3D" id="3.40.50.720">
    <property type="entry name" value="NAD(P)-binding Rossmann-like Domain"/>
    <property type="match status" value="1"/>
</dbReference>
<dbReference type="HAMAP" id="MF_00046">
    <property type="entry name" value="MurC"/>
    <property type="match status" value="1"/>
</dbReference>
<dbReference type="InterPro" id="IPR036565">
    <property type="entry name" value="Mur-like_cat_sf"/>
</dbReference>
<dbReference type="InterPro" id="IPR004101">
    <property type="entry name" value="Mur_ligase_C"/>
</dbReference>
<dbReference type="InterPro" id="IPR036615">
    <property type="entry name" value="Mur_ligase_C_dom_sf"/>
</dbReference>
<dbReference type="InterPro" id="IPR013221">
    <property type="entry name" value="Mur_ligase_cen"/>
</dbReference>
<dbReference type="InterPro" id="IPR000713">
    <property type="entry name" value="Mur_ligase_N"/>
</dbReference>
<dbReference type="InterPro" id="IPR050061">
    <property type="entry name" value="MurCDEF_pg_biosynth"/>
</dbReference>
<dbReference type="InterPro" id="IPR005758">
    <property type="entry name" value="UDP-N-AcMur_Ala_ligase_MurC"/>
</dbReference>
<dbReference type="NCBIfam" id="TIGR01082">
    <property type="entry name" value="murC"/>
    <property type="match status" value="1"/>
</dbReference>
<dbReference type="PANTHER" id="PTHR43445:SF3">
    <property type="entry name" value="UDP-N-ACETYLMURAMATE--L-ALANINE LIGASE"/>
    <property type="match status" value="1"/>
</dbReference>
<dbReference type="PANTHER" id="PTHR43445">
    <property type="entry name" value="UDP-N-ACETYLMURAMATE--L-ALANINE LIGASE-RELATED"/>
    <property type="match status" value="1"/>
</dbReference>
<dbReference type="Pfam" id="PF01225">
    <property type="entry name" value="Mur_ligase"/>
    <property type="match status" value="1"/>
</dbReference>
<dbReference type="Pfam" id="PF02875">
    <property type="entry name" value="Mur_ligase_C"/>
    <property type="match status" value="1"/>
</dbReference>
<dbReference type="Pfam" id="PF08245">
    <property type="entry name" value="Mur_ligase_M"/>
    <property type="match status" value="1"/>
</dbReference>
<dbReference type="SUPFAM" id="SSF51984">
    <property type="entry name" value="MurCD N-terminal domain"/>
    <property type="match status" value="1"/>
</dbReference>
<dbReference type="SUPFAM" id="SSF53623">
    <property type="entry name" value="MurD-like peptide ligases, catalytic domain"/>
    <property type="match status" value="1"/>
</dbReference>
<dbReference type="SUPFAM" id="SSF53244">
    <property type="entry name" value="MurD-like peptide ligases, peptide-binding domain"/>
    <property type="match status" value="1"/>
</dbReference>
<proteinExistence type="inferred from homology"/>
<accession>A5EPK1</accession>
<name>MURC_BRASB</name>
<organism>
    <name type="scientific">Bradyrhizobium sp. (strain BTAi1 / ATCC BAA-1182)</name>
    <dbReference type="NCBI Taxonomy" id="288000"/>
    <lineage>
        <taxon>Bacteria</taxon>
        <taxon>Pseudomonadati</taxon>
        <taxon>Pseudomonadota</taxon>
        <taxon>Alphaproteobacteria</taxon>
        <taxon>Hyphomicrobiales</taxon>
        <taxon>Nitrobacteraceae</taxon>
        <taxon>Bradyrhizobium</taxon>
    </lineage>
</organism>
<feature type="chain" id="PRO_1000004314" description="UDP-N-acetylmuramate--L-alanine ligase">
    <location>
        <begin position="1"/>
        <end position="467"/>
    </location>
</feature>
<feature type="binding site" evidence="1">
    <location>
        <begin position="114"/>
        <end position="120"/>
    </location>
    <ligand>
        <name>ATP</name>
        <dbReference type="ChEBI" id="CHEBI:30616"/>
    </ligand>
</feature>
<protein>
    <recommendedName>
        <fullName evidence="1">UDP-N-acetylmuramate--L-alanine ligase</fullName>
        <ecNumber evidence="1">6.3.2.8</ecNumber>
    </recommendedName>
    <alternativeName>
        <fullName evidence="1">UDP-N-acetylmuramoyl-L-alanine synthetase</fullName>
    </alternativeName>
</protein>
<evidence type="ECO:0000255" key="1">
    <source>
        <dbReference type="HAMAP-Rule" id="MF_00046"/>
    </source>
</evidence>
<reference key="1">
    <citation type="journal article" date="2007" name="Science">
        <title>Legumes symbioses: absence of nod genes in photosynthetic bradyrhizobia.</title>
        <authorList>
            <person name="Giraud E."/>
            <person name="Moulin L."/>
            <person name="Vallenet D."/>
            <person name="Barbe V."/>
            <person name="Cytryn E."/>
            <person name="Avarre J.-C."/>
            <person name="Jaubert M."/>
            <person name="Simon D."/>
            <person name="Cartieaux F."/>
            <person name="Prin Y."/>
            <person name="Bena G."/>
            <person name="Hannibal L."/>
            <person name="Fardoux J."/>
            <person name="Kojadinovic M."/>
            <person name="Vuillet L."/>
            <person name="Lajus A."/>
            <person name="Cruveiller S."/>
            <person name="Rouy Z."/>
            <person name="Mangenot S."/>
            <person name="Segurens B."/>
            <person name="Dossat C."/>
            <person name="Franck W.L."/>
            <person name="Chang W.-S."/>
            <person name="Saunders E."/>
            <person name="Bruce D."/>
            <person name="Richardson P."/>
            <person name="Normand P."/>
            <person name="Dreyfus B."/>
            <person name="Pignol D."/>
            <person name="Stacey G."/>
            <person name="Emerich D."/>
            <person name="Vermeglio A."/>
            <person name="Medigue C."/>
            <person name="Sadowsky M."/>
        </authorList>
    </citation>
    <scope>NUCLEOTIDE SEQUENCE [LARGE SCALE GENOMIC DNA]</scope>
    <source>
        <strain>BTAi1 / ATCC BAA-1182</strain>
    </source>
</reference>
<sequence>MRLPREIGPIHFVGIGGIGMSGIAEVLCNLGYTVQGSDASDNANVARLREKGITVSVGHKAENVAGADVVVVSTAIKRDNPELMTARAQRIPVVRRAEMLAELMRLKSCVAIAGTHGKTTTTSMVAALLDAGGIDPTVINGGIINAYGTNARLGAGDWMVVEADESDGTFLKLPADVAIVTNVDPEHLDHFKTFDAVQDAFRAFVENVPFYGFAVMCIDHPVVQALVGKIEDRRIITYGVNPQADVRLVDLSPANGSSRFKVVFRDRKSGATHEISDITLPMPGRHNASNATAAIAVAHELGISDEAIRKAIAGFGGVKRRFTRTGEWNGVTIIDDYGHHPVEIAAVLKAARESTSGKVIAVVQPHRYTRLQSLFEEFCTCFNDADAVIVADVYPAGEAPIEGIDRDHFVLGLRAHGHRDVLPLPQAADLAGIVKRLAKSGDLVVCLGAGNITQWAYALPNELKALG</sequence>
<comment type="function">
    <text evidence="1">Cell wall formation.</text>
</comment>
<comment type="catalytic activity">
    <reaction evidence="1">
        <text>UDP-N-acetyl-alpha-D-muramate + L-alanine + ATP = UDP-N-acetyl-alpha-D-muramoyl-L-alanine + ADP + phosphate + H(+)</text>
        <dbReference type="Rhea" id="RHEA:23372"/>
        <dbReference type="ChEBI" id="CHEBI:15378"/>
        <dbReference type="ChEBI" id="CHEBI:30616"/>
        <dbReference type="ChEBI" id="CHEBI:43474"/>
        <dbReference type="ChEBI" id="CHEBI:57972"/>
        <dbReference type="ChEBI" id="CHEBI:70757"/>
        <dbReference type="ChEBI" id="CHEBI:83898"/>
        <dbReference type="ChEBI" id="CHEBI:456216"/>
        <dbReference type="EC" id="6.3.2.8"/>
    </reaction>
</comment>
<comment type="pathway">
    <text evidence="1">Cell wall biogenesis; peptidoglycan biosynthesis.</text>
</comment>
<comment type="subcellular location">
    <subcellularLocation>
        <location evidence="1">Cytoplasm</location>
    </subcellularLocation>
</comment>
<comment type="similarity">
    <text evidence="1">Belongs to the MurCDEF family.</text>
</comment>
<gene>
    <name evidence="1" type="primary">murC</name>
    <name type="ordered locus">BBta_6171</name>
</gene>
<keyword id="KW-0067">ATP-binding</keyword>
<keyword id="KW-0131">Cell cycle</keyword>
<keyword id="KW-0132">Cell division</keyword>
<keyword id="KW-0133">Cell shape</keyword>
<keyword id="KW-0961">Cell wall biogenesis/degradation</keyword>
<keyword id="KW-0963">Cytoplasm</keyword>
<keyword id="KW-0436">Ligase</keyword>
<keyword id="KW-0547">Nucleotide-binding</keyword>
<keyword id="KW-0573">Peptidoglycan synthesis</keyword>
<keyword id="KW-1185">Reference proteome</keyword>